<organism>
    <name type="scientific">Pyrococcus abyssi (strain GE5 / Orsay)</name>
    <dbReference type="NCBI Taxonomy" id="272844"/>
    <lineage>
        <taxon>Archaea</taxon>
        <taxon>Methanobacteriati</taxon>
        <taxon>Methanobacteriota</taxon>
        <taxon>Thermococci</taxon>
        <taxon>Thermococcales</taxon>
        <taxon>Thermococcaceae</taxon>
        <taxon>Pyrococcus</taxon>
    </lineage>
</organism>
<dbReference type="EC" id="5.3.1.6" evidence="1"/>
<dbReference type="EMBL" id="AJ248285">
    <property type="protein sequence ID" value="CAB49687.1"/>
    <property type="molecule type" value="Genomic_DNA"/>
</dbReference>
<dbReference type="EMBL" id="HE613800">
    <property type="protein sequence ID" value="CCE70169.1"/>
    <property type="molecule type" value="Genomic_DNA"/>
</dbReference>
<dbReference type="PIR" id="F75121">
    <property type="entry name" value="F75121"/>
</dbReference>
<dbReference type="RefSeq" id="WP_010867895.1">
    <property type="nucleotide sequence ID" value="NC_000868.1"/>
</dbReference>
<dbReference type="SMR" id="Q9V0L6"/>
<dbReference type="STRING" id="272844.PAB0522"/>
<dbReference type="KEGG" id="pab:PAB0522"/>
<dbReference type="PATRIC" id="fig|272844.11.peg.813"/>
<dbReference type="eggNOG" id="arCOG01122">
    <property type="taxonomic scope" value="Archaea"/>
</dbReference>
<dbReference type="HOGENOM" id="CLU_056590_1_1_2"/>
<dbReference type="OrthoDB" id="19013at2157"/>
<dbReference type="PhylomeDB" id="Q9V0L6"/>
<dbReference type="UniPathway" id="UPA00115">
    <property type="reaction ID" value="UER00412"/>
</dbReference>
<dbReference type="Proteomes" id="UP000000810">
    <property type="component" value="Chromosome"/>
</dbReference>
<dbReference type="Proteomes" id="UP000009139">
    <property type="component" value="Chromosome"/>
</dbReference>
<dbReference type="GO" id="GO:0005829">
    <property type="term" value="C:cytosol"/>
    <property type="evidence" value="ECO:0007669"/>
    <property type="project" value="TreeGrafter"/>
</dbReference>
<dbReference type="GO" id="GO:0004751">
    <property type="term" value="F:ribose-5-phosphate isomerase activity"/>
    <property type="evidence" value="ECO:0007669"/>
    <property type="project" value="UniProtKB-UniRule"/>
</dbReference>
<dbReference type="GO" id="GO:0006014">
    <property type="term" value="P:D-ribose metabolic process"/>
    <property type="evidence" value="ECO:0007669"/>
    <property type="project" value="TreeGrafter"/>
</dbReference>
<dbReference type="GO" id="GO:0009052">
    <property type="term" value="P:pentose-phosphate shunt, non-oxidative branch"/>
    <property type="evidence" value="ECO:0007669"/>
    <property type="project" value="UniProtKB-UniRule"/>
</dbReference>
<dbReference type="CDD" id="cd01398">
    <property type="entry name" value="RPI_A"/>
    <property type="match status" value="1"/>
</dbReference>
<dbReference type="FunFam" id="3.30.70.260:FF:000018">
    <property type="entry name" value="Ribose-5-phosphate isomerase A"/>
    <property type="match status" value="1"/>
</dbReference>
<dbReference type="FunFam" id="3.40.50.1360:FF:000001">
    <property type="entry name" value="Ribose-5-phosphate isomerase A"/>
    <property type="match status" value="1"/>
</dbReference>
<dbReference type="Gene3D" id="3.30.70.260">
    <property type="match status" value="1"/>
</dbReference>
<dbReference type="Gene3D" id="3.40.50.1360">
    <property type="match status" value="1"/>
</dbReference>
<dbReference type="HAMAP" id="MF_00170">
    <property type="entry name" value="Rib_5P_isom_A"/>
    <property type="match status" value="1"/>
</dbReference>
<dbReference type="InterPro" id="IPR037171">
    <property type="entry name" value="NagB/RpiA_transferase-like"/>
</dbReference>
<dbReference type="InterPro" id="IPR020672">
    <property type="entry name" value="Ribose5P_isomerase_typA_subgr"/>
</dbReference>
<dbReference type="InterPro" id="IPR004788">
    <property type="entry name" value="Ribose5P_isomerase_type_A"/>
</dbReference>
<dbReference type="NCBIfam" id="NF001924">
    <property type="entry name" value="PRK00702.1"/>
    <property type="match status" value="1"/>
</dbReference>
<dbReference type="NCBIfam" id="TIGR00021">
    <property type="entry name" value="rpiA"/>
    <property type="match status" value="1"/>
</dbReference>
<dbReference type="PANTHER" id="PTHR11934">
    <property type="entry name" value="RIBOSE-5-PHOSPHATE ISOMERASE"/>
    <property type="match status" value="1"/>
</dbReference>
<dbReference type="PANTHER" id="PTHR11934:SF0">
    <property type="entry name" value="RIBOSE-5-PHOSPHATE ISOMERASE"/>
    <property type="match status" value="1"/>
</dbReference>
<dbReference type="Pfam" id="PF06026">
    <property type="entry name" value="Rib_5-P_isom_A"/>
    <property type="match status" value="1"/>
</dbReference>
<dbReference type="SUPFAM" id="SSF75445">
    <property type="entry name" value="D-ribose-5-phosphate isomerase (RpiA), lid domain"/>
    <property type="match status" value="1"/>
</dbReference>
<dbReference type="SUPFAM" id="SSF100950">
    <property type="entry name" value="NagB/RpiA/CoA transferase-like"/>
    <property type="match status" value="1"/>
</dbReference>
<feature type="chain" id="PRO_0000158515" description="Ribose-5-phosphate isomerase A">
    <location>
        <begin position="1"/>
        <end position="229"/>
    </location>
</feature>
<feature type="active site" description="Proton acceptor" evidence="1">
    <location>
        <position position="107"/>
    </location>
</feature>
<feature type="binding site" evidence="1">
    <location>
        <begin position="28"/>
        <end position="31"/>
    </location>
    <ligand>
        <name>substrate</name>
    </ligand>
</feature>
<feature type="binding site" evidence="1">
    <location>
        <begin position="85"/>
        <end position="88"/>
    </location>
    <ligand>
        <name>substrate</name>
    </ligand>
</feature>
<feature type="binding site" evidence="1">
    <location>
        <begin position="98"/>
        <end position="101"/>
    </location>
    <ligand>
        <name>substrate</name>
    </ligand>
</feature>
<feature type="binding site" evidence="1">
    <location>
        <position position="125"/>
    </location>
    <ligand>
        <name>substrate</name>
    </ligand>
</feature>
<comment type="function">
    <text evidence="1">Catalyzes the reversible conversion of ribose-5-phosphate to ribulose 5-phosphate.</text>
</comment>
<comment type="catalytic activity">
    <reaction evidence="1">
        <text>aldehydo-D-ribose 5-phosphate = D-ribulose 5-phosphate</text>
        <dbReference type="Rhea" id="RHEA:14657"/>
        <dbReference type="ChEBI" id="CHEBI:58121"/>
        <dbReference type="ChEBI" id="CHEBI:58273"/>
        <dbReference type="EC" id="5.3.1.6"/>
    </reaction>
</comment>
<comment type="pathway">
    <text evidence="1">Carbohydrate degradation; pentose phosphate pathway; D-ribose 5-phosphate from D-ribulose 5-phosphate (non-oxidative stage): step 1/1.</text>
</comment>
<comment type="subunit">
    <text evidence="1">Homodimer.</text>
</comment>
<comment type="similarity">
    <text evidence="1">Belongs to the ribose 5-phosphate isomerase family.</text>
</comment>
<keyword id="KW-0413">Isomerase</keyword>
<accession>Q9V0L6</accession>
<accession>G8ZGX4</accession>
<protein>
    <recommendedName>
        <fullName evidence="1">Ribose-5-phosphate isomerase A</fullName>
        <ecNumber evidence="1">5.3.1.6</ecNumber>
    </recommendedName>
    <alternativeName>
        <fullName evidence="1">Phosphoriboisomerase A</fullName>
        <shortName evidence="1">PRI</shortName>
    </alternativeName>
</protein>
<gene>
    <name evidence="1" type="primary">rpiA</name>
    <name type="synonym">rpi</name>
    <name type="ordered locus">PYRAB07730</name>
    <name type="ORF">PAB0522</name>
</gene>
<sequence length="229" mass="24986">MNIEEMKKIAAKEALKFIEDDMVIGLGTGSTTAYFIRLLGDMIKKGEVSDIVGVPTSYQSRLLAIESGIPVATLDQVDAIDVAVDGADEVDPNLNLIKGRGAALTMEKIIESRAGMFIVLVDERKLVDYLCQKMPVPIEVIPQAWRAIVEELSIFNAEAKLRMGVNKDGPVITDNGNFIIDAKFPRIDDPLDMEIELNTIPGVVENGIFADIADIVIVGTKEGVKTLER</sequence>
<name>RPIA_PYRAB</name>
<proteinExistence type="inferred from homology"/>
<reference key="1">
    <citation type="journal article" date="2003" name="Mol. Microbiol.">
        <title>An integrated analysis of the genome of the hyperthermophilic archaeon Pyrococcus abyssi.</title>
        <authorList>
            <person name="Cohen G.N."/>
            <person name="Barbe V."/>
            <person name="Flament D."/>
            <person name="Galperin M."/>
            <person name="Heilig R."/>
            <person name="Lecompte O."/>
            <person name="Poch O."/>
            <person name="Prieur D."/>
            <person name="Querellou J."/>
            <person name="Ripp R."/>
            <person name="Thierry J.-C."/>
            <person name="Van der Oost J."/>
            <person name="Weissenbach J."/>
            <person name="Zivanovic Y."/>
            <person name="Forterre P."/>
        </authorList>
    </citation>
    <scope>NUCLEOTIDE SEQUENCE [LARGE SCALE GENOMIC DNA]</scope>
    <source>
        <strain>GE5 / Orsay</strain>
    </source>
</reference>
<reference key="2">
    <citation type="journal article" date="2012" name="Curr. Microbiol.">
        <title>Re-annotation of two hyperthermophilic archaea Pyrococcus abyssi GE5 and Pyrococcus furiosus DSM 3638.</title>
        <authorList>
            <person name="Gao J."/>
            <person name="Wang J."/>
        </authorList>
    </citation>
    <scope>GENOME REANNOTATION</scope>
    <source>
        <strain>GE5 / Orsay</strain>
    </source>
</reference>
<evidence type="ECO:0000255" key="1">
    <source>
        <dbReference type="HAMAP-Rule" id="MF_00170"/>
    </source>
</evidence>